<proteinExistence type="inferred from homology"/>
<organism>
    <name type="scientific">Mycolicibacterium vanbaalenii (strain DSM 7251 / JCM 13017 / BCRC 16820 / KCTC 9966 / NRRL B-24157 / PYR-1)</name>
    <name type="common">Mycobacterium vanbaalenii</name>
    <dbReference type="NCBI Taxonomy" id="350058"/>
    <lineage>
        <taxon>Bacteria</taxon>
        <taxon>Bacillati</taxon>
        <taxon>Actinomycetota</taxon>
        <taxon>Actinomycetes</taxon>
        <taxon>Mycobacteriales</taxon>
        <taxon>Mycobacteriaceae</taxon>
        <taxon>Mycolicibacterium</taxon>
    </lineage>
</organism>
<gene>
    <name evidence="1" type="primary">mdh</name>
    <name type="ordered locus">Mvan_3067</name>
</gene>
<feature type="chain" id="PRO_0000292373" description="Malate dehydrogenase">
    <location>
        <begin position="1"/>
        <end position="332"/>
    </location>
</feature>
<feature type="active site" description="Proton acceptor" evidence="1">
    <location>
        <position position="191"/>
    </location>
</feature>
<feature type="binding site" evidence="1">
    <location>
        <begin position="15"/>
        <end position="21"/>
    </location>
    <ligand>
        <name>NAD(+)</name>
        <dbReference type="ChEBI" id="CHEBI:57540"/>
    </ligand>
</feature>
<feature type="binding site" evidence="1">
    <location>
        <position position="96"/>
    </location>
    <ligand>
        <name>substrate</name>
    </ligand>
</feature>
<feature type="binding site" evidence="1">
    <location>
        <position position="102"/>
    </location>
    <ligand>
        <name>substrate</name>
    </ligand>
</feature>
<feature type="binding site" evidence="1">
    <location>
        <position position="109"/>
    </location>
    <ligand>
        <name>NAD(+)</name>
        <dbReference type="ChEBI" id="CHEBI:57540"/>
    </ligand>
</feature>
<feature type="binding site" evidence="1">
    <location>
        <begin position="133"/>
        <end position="135"/>
    </location>
    <ligand>
        <name>NAD(+)</name>
        <dbReference type="ChEBI" id="CHEBI:57540"/>
    </ligand>
</feature>
<feature type="binding site" evidence="1">
    <location>
        <position position="135"/>
    </location>
    <ligand>
        <name>substrate</name>
    </ligand>
</feature>
<feature type="binding site" evidence="1">
    <location>
        <position position="166"/>
    </location>
    <ligand>
        <name>substrate</name>
    </ligand>
</feature>
<sequence>MSSTTASPVTVAVTGAAGHIGYAALFRIAAGAMLGHTTPVTLRLLELPDAVRAAEGVVMELEDGAFPLLAGTEIYDDPTRAFDGVDVALLIGARPRTKGMERADLLGANAEIFATSGKALNAGASPDVRVLVVGNPANTNALVASAHAPDIPADRFTALTRLDHNRAVAATARHSGVPVTEISRMTIWGNHSPTQYPDIFHAVVGGRSGADYAADTRWLTDDFIPTVARRGTAIIEARGASSAASAANGAIDHIDDWVHGTPDGDWTSVALPSPGAYGVDEGLVCSFPCRSVGGRWEIVEGLDINPFSRARIDASVAELRTERDAVAALGLL</sequence>
<comment type="function">
    <text evidence="1">Catalyzes the reversible oxidation of malate to oxaloacetate.</text>
</comment>
<comment type="catalytic activity">
    <reaction evidence="1">
        <text>(S)-malate + NAD(+) = oxaloacetate + NADH + H(+)</text>
        <dbReference type="Rhea" id="RHEA:21432"/>
        <dbReference type="ChEBI" id="CHEBI:15378"/>
        <dbReference type="ChEBI" id="CHEBI:15589"/>
        <dbReference type="ChEBI" id="CHEBI:16452"/>
        <dbReference type="ChEBI" id="CHEBI:57540"/>
        <dbReference type="ChEBI" id="CHEBI:57945"/>
        <dbReference type="EC" id="1.1.1.37"/>
    </reaction>
</comment>
<comment type="similarity">
    <text evidence="1">Belongs to the LDH/MDH superfamily. MDH type 2 family.</text>
</comment>
<accession>A1T9L9</accession>
<protein>
    <recommendedName>
        <fullName evidence="1">Malate dehydrogenase</fullName>
        <ecNumber evidence="1">1.1.1.37</ecNumber>
    </recommendedName>
</protein>
<evidence type="ECO:0000255" key="1">
    <source>
        <dbReference type="HAMAP-Rule" id="MF_01517"/>
    </source>
</evidence>
<keyword id="KW-0520">NAD</keyword>
<keyword id="KW-0560">Oxidoreductase</keyword>
<keyword id="KW-0816">Tricarboxylic acid cycle</keyword>
<dbReference type="EC" id="1.1.1.37" evidence="1"/>
<dbReference type="EMBL" id="CP000511">
    <property type="protein sequence ID" value="ABM13869.1"/>
    <property type="molecule type" value="Genomic_DNA"/>
</dbReference>
<dbReference type="RefSeq" id="WP_011780274.1">
    <property type="nucleotide sequence ID" value="NZ_JACKSD010000192.1"/>
</dbReference>
<dbReference type="SMR" id="A1T9L9"/>
<dbReference type="STRING" id="350058.Mvan_3067"/>
<dbReference type="KEGG" id="mva:Mvan_3067"/>
<dbReference type="eggNOG" id="COG0039">
    <property type="taxonomic scope" value="Bacteria"/>
</dbReference>
<dbReference type="HOGENOM" id="CLU_040727_2_0_11"/>
<dbReference type="Proteomes" id="UP000009159">
    <property type="component" value="Chromosome"/>
</dbReference>
<dbReference type="GO" id="GO:0030060">
    <property type="term" value="F:L-malate dehydrogenase (NAD+) activity"/>
    <property type="evidence" value="ECO:0007669"/>
    <property type="project" value="UniProtKB-UniRule"/>
</dbReference>
<dbReference type="GO" id="GO:0006108">
    <property type="term" value="P:malate metabolic process"/>
    <property type="evidence" value="ECO:0007669"/>
    <property type="project" value="InterPro"/>
</dbReference>
<dbReference type="GO" id="GO:0006099">
    <property type="term" value="P:tricarboxylic acid cycle"/>
    <property type="evidence" value="ECO:0007669"/>
    <property type="project" value="UniProtKB-UniRule"/>
</dbReference>
<dbReference type="CDD" id="cd01338">
    <property type="entry name" value="MDH_chloroplast-like"/>
    <property type="match status" value="1"/>
</dbReference>
<dbReference type="FunFam" id="3.40.50.720:FF:000010">
    <property type="entry name" value="Malate dehydrogenase"/>
    <property type="match status" value="1"/>
</dbReference>
<dbReference type="FunFam" id="3.90.110.10:FF:000002">
    <property type="entry name" value="Malate dehydrogenase"/>
    <property type="match status" value="1"/>
</dbReference>
<dbReference type="Gene3D" id="3.90.110.10">
    <property type="entry name" value="Lactate dehydrogenase/glycoside hydrolase, family 4, C-terminal"/>
    <property type="match status" value="1"/>
</dbReference>
<dbReference type="Gene3D" id="3.40.50.720">
    <property type="entry name" value="NAD(P)-binding Rossmann-like Domain"/>
    <property type="match status" value="1"/>
</dbReference>
<dbReference type="HAMAP" id="MF_01517">
    <property type="entry name" value="Malate_dehydrog_2"/>
    <property type="match status" value="1"/>
</dbReference>
<dbReference type="InterPro" id="IPR001557">
    <property type="entry name" value="L-lactate/malate_DH"/>
</dbReference>
<dbReference type="InterPro" id="IPR022383">
    <property type="entry name" value="Lactate/malate_DH_C"/>
</dbReference>
<dbReference type="InterPro" id="IPR001236">
    <property type="entry name" value="Lactate/malate_DH_N"/>
</dbReference>
<dbReference type="InterPro" id="IPR015955">
    <property type="entry name" value="Lactate_DH/Glyco_Ohase_4_C"/>
</dbReference>
<dbReference type="InterPro" id="IPR010945">
    <property type="entry name" value="Malate_DH_type2"/>
</dbReference>
<dbReference type="InterPro" id="IPR036291">
    <property type="entry name" value="NAD(P)-bd_dom_sf"/>
</dbReference>
<dbReference type="NCBIfam" id="TIGR01759">
    <property type="entry name" value="MalateDH-SF1"/>
    <property type="match status" value="1"/>
</dbReference>
<dbReference type="NCBIfam" id="NF003916">
    <property type="entry name" value="PRK05442.1"/>
    <property type="match status" value="1"/>
</dbReference>
<dbReference type="PANTHER" id="PTHR23382">
    <property type="entry name" value="MALATE DEHYDROGENASE"/>
    <property type="match status" value="1"/>
</dbReference>
<dbReference type="Pfam" id="PF02866">
    <property type="entry name" value="Ldh_1_C"/>
    <property type="match status" value="1"/>
</dbReference>
<dbReference type="Pfam" id="PF00056">
    <property type="entry name" value="Ldh_1_N"/>
    <property type="match status" value="1"/>
</dbReference>
<dbReference type="PIRSF" id="PIRSF000102">
    <property type="entry name" value="Lac_mal_DH"/>
    <property type="match status" value="1"/>
</dbReference>
<dbReference type="SUPFAM" id="SSF56327">
    <property type="entry name" value="LDH C-terminal domain-like"/>
    <property type="match status" value="1"/>
</dbReference>
<dbReference type="SUPFAM" id="SSF51735">
    <property type="entry name" value="NAD(P)-binding Rossmann-fold domains"/>
    <property type="match status" value="1"/>
</dbReference>
<name>MDH_MYCVP</name>
<reference key="1">
    <citation type="submission" date="2006-12" db="EMBL/GenBank/DDBJ databases">
        <title>Complete sequence of Mycobacterium vanbaalenii PYR-1.</title>
        <authorList>
            <consortium name="US DOE Joint Genome Institute"/>
            <person name="Copeland A."/>
            <person name="Lucas S."/>
            <person name="Lapidus A."/>
            <person name="Barry K."/>
            <person name="Detter J.C."/>
            <person name="Glavina del Rio T."/>
            <person name="Hammon N."/>
            <person name="Israni S."/>
            <person name="Dalin E."/>
            <person name="Tice H."/>
            <person name="Pitluck S."/>
            <person name="Singan V."/>
            <person name="Schmutz J."/>
            <person name="Larimer F."/>
            <person name="Land M."/>
            <person name="Hauser L."/>
            <person name="Kyrpides N."/>
            <person name="Anderson I.J."/>
            <person name="Miller C."/>
            <person name="Richardson P."/>
        </authorList>
    </citation>
    <scope>NUCLEOTIDE SEQUENCE [LARGE SCALE GENOMIC DNA]</scope>
    <source>
        <strain>DSM 7251 / JCM 13017 / BCRC 16820 / KCTC 9966 / NRRL B-24157 / PYR-1</strain>
    </source>
</reference>